<gene>
    <name evidence="1" type="primary">rpsT</name>
    <name type="ordered locus">LPC_0505</name>
</gene>
<feature type="chain" id="PRO_1000014596" description="Small ribosomal subunit protein bS20">
    <location>
        <begin position="1"/>
        <end position="88"/>
    </location>
</feature>
<keyword id="KW-0687">Ribonucleoprotein</keyword>
<keyword id="KW-0689">Ribosomal protein</keyword>
<keyword id="KW-0694">RNA-binding</keyword>
<keyword id="KW-0699">rRNA-binding</keyword>
<comment type="function">
    <text evidence="1">Binds directly to 16S ribosomal RNA.</text>
</comment>
<comment type="similarity">
    <text evidence="1">Belongs to the bacterial ribosomal protein bS20 family.</text>
</comment>
<reference key="1">
    <citation type="submission" date="2006-11" db="EMBL/GenBank/DDBJ databases">
        <title>Identification and characterization of a new conjugation/ type IVA secretion system (trb/tra) of L. pneumophila Corby localized on a mobile genomic island.</title>
        <authorList>
            <person name="Gloeckner G."/>
            <person name="Albert-Weissenberger C."/>
            <person name="Weinmann E."/>
            <person name="Jacobi S."/>
            <person name="Schunder E."/>
            <person name="Steinert M."/>
            <person name="Buchrieser C."/>
            <person name="Hacker J."/>
            <person name="Heuner K."/>
        </authorList>
    </citation>
    <scope>NUCLEOTIDE SEQUENCE [LARGE SCALE GENOMIC DNA]</scope>
    <source>
        <strain>Corby</strain>
    </source>
</reference>
<evidence type="ECO:0000255" key="1">
    <source>
        <dbReference type="HAMAP-Rule" id="MF_00500"/>
    </source>
</evidence>
<evidence type="ECO:0000305" key="2"/>
<sequence>MANIKSAIKRARQNVKLRQHNASARSMYRTYIKNVLKAVESGDQEAARAAYTKAQPVIDKAANKGLIHKNKAARIKGRLVARLKAMAA</sequence>
<organism>
    <name type="scientific">Legionella pneumophila (strain Corby)</name>
    <dbReference type="NCBI Taxonomy" id="400673"/>
    <lineage>
        <taxon>Bacteria</taxon>
        <taxon>Pseudomonadati</taxon>
        <taxon>Pseudomonadota</taxon>
        <taxon>Gammaproteobacteria</taxon>
        <taxon>Legionellales</taxon>
        <taxon>Legionellaceae</taxon>
        <taxon>Legionella</taxon>
    </lineage>
</organism>
<proteinExistence type="inferred from homology"/>
<accession>A5IAU0</accession>
<protein>
    <recommendedName>
        <fullName evidence="1">Small ribosomal subunit protein bS20</fullName>
    </recommendedName>
    <alternativeName>
        <fullName evidence="2">30S ribosomal protein S20</fullName>
    </alternativeName>
</protein>
<name>RS20_LEGPC</name>
<dbReference type="EMBL" id="CP000675">
    <property type="protein sequence ID" value="ABQ54490.1"/>
    <property type="molecule type" value="Genomic_DNA"/>
</dbReference>
<dbReference type="RefSeq" id="WP_010948336.1">
    <property type="nucleotide sequence ID" value="NZ_JAPMSS010000010.1"/>
</dbReference>
<dbReference type="SMR" id="A5IAU0"/>
<dbReference type="GeneID" id="57036635"/>
<dbReference type="KEGG" id="lpc:LPC_0505"/>
<dbReference type="HOGENOM" id="CLU_160655_4_0_6"/>
<dbReference type="GO" id="GO:0005829">
    <property type="term" value="C:cytosol"/>
    <property type="evidence" value="ECO:0007669"/>
    <property type="project" value="TreeGrafter"/>
</dbReference>
<dbReference type="GO" id="GO:0015935">
    <property type="term" value="C:small ribosomal subunit"/>
    <property type="evidence" value="ECO:0007669"/>
    <property type="project" value="TreeGrafter"/>
</dbReference>
<dbReference type="GO" id="GO:0070181">
    <property type="term" value="F:small ribosomal subunit rRNA binding"/>
    <property type="evidence" value="ECO:0007669"/>
    <property type="project" value="TreeGrafter"/>
</dbReference>
<dbReference type="GO" id="GO:0003735">
    <property type="term" value="F:structural constituent of ribosome"/>
    <property type="evidence" value="ECO:0007669"/>
    <property type="project" value="InterPro"/>
</dbReference>
<dbReference type="GO" id="GO:0006412">
    <property type="term" value="P:translation"/>
    <property type="evidence" value="ECO:0007669"/>
    <property type="project" value="UniProtKB-UniRule"/>
</dbReference>
<dbReference type="FunFam" id="1.20.58.110:FF:000001">
    <property type="entry name" value="30S ribosomal protein S20"/>
    <property type="match status" value="1"/>
</dbReference>
<dbReference type="Gene3D" id="1.20.58.110">
    <property type="entry name" value="Ribosomal protein S20"/>
    <property type="match status" value="1"/>
</dbReference>
<dbReference type="HAMAP" id="MF_00500">
    <property type="entry name" value="Ribosomal_bS20"/>
    <property type="match status" value="1"/>
</dbReference>
<dbReference type="InterPro" id="IPR002583">
    <property type="entry name" value="Ribosomal_bS20"/>
</dbReference>
<dbReference type="InterPro" id="IPR036510">
    <property type="entry name" value="Ribosomal_bS20_sf"/>
</dbReference>
<dbReference type="NCBIfam" id="TIGR00029">
    <property type="entry name" value="S20"/>
    <property type="match status" value="1"/>
</dbReference>
<dbReference type="PANTHER" id="PTHR33398">
    <property type="entry name" value="30S RIBOSOMAL PROTEIN S20"/>
    <property type="match status" value="1"/>
</dbReference>
<dbReference type="PANTHER" id="PTHR33398:SF1">
    <property type="entry name" value="SMALL RIBOSOMAL SUBUNIT PROTEIN BS20C"/>
    <property type="match status" value="1"/>
</dbReference>
<dbReference type="Pfam" id="PF01649">
    <property type="entry name" value="Ribosomal_S20p"/>
    <property type="match status" value="1"/>
</dbReference>
<dbReference type="SUPFAM" id="SSF46992">
    <property type="entry name" value="Ribosomal protein S20"/>
    <property type="match status" value="1"/>
</dbReference>